<accession>Q27237</accession>
<accession>O02528</accession>
<accession>O02529</accession>
<accession>O02549</accession>
<accession>Q24554</accession>
<accession>Q27259</accession>
<accession>Q7KVH8</accession>
<accession>Q8T9A7</accession>
<accession>Q9W1K7</accession>
<gene>
    <name evidence="13 14" type="primary">l(2)tid</name>
    <name evidence="16" type="synonym">tid</name>
    <name evidence="19" type="ORF">CG5504</name>
</gene>
<comment type="function">
    <text evidence="7 9">Involved in hh/hedgehog signaling (PubMed:12783860). May act as a tumor suppressor in larval imaginal disks (PubMed:7758246).</text>
</comment>
<comment type="subunit">
    <text evidence="7">Interacts with ptc (via C-terminal cytoplasmic region); the interaction is probably direct (PubMed:12783860). Interacts with hh/hedgehog; the interaction is probably mediated by the hedgehog receptor ptc (PubMed:12783860).</text>
</comment>
<comment type="subcellular location">
    <subcellularLocation>
        <location evidence="7">Cytoplasm</location>
        <location evidence="7">Cytosol</location>
    </subcellularLocation>
    <subcellularLocation>
        <location evidence="7 11">Mitochondrion</location>
    </subcellularLocation>
    <subcellularLocation>
        <location evidence="11">Mitochondrion outer membrane</location>
    </subcellularLocation>
    <text evidence="7">The 50 kDa and 40 kDa protein products TID50 and TID40 localizes to the mitochondrion (PubMed:12783860). The 47 kDa protein product localizes to the cytosol (PubMed:12783860).</text>
</comment>
<comment type="alternative products">
    <event type="alternative splicing"/>
    <isoform>
        <id>Q27237-1</id>
        <name evidence="19">B</name>
        <sequence type="displayed"/>
    </isoform>
    <isoform>
        <id>Q27237-2</id>
        <name evidence="19">A</name>
        <sequence type="described" ref="VSP_008308 VSP_008309"/>
    </isoform>
</comment>
<comment type="tissue specificity">
    <text evidence="9 10">Ubiquitously expressed throughout embryonic development. In larvae, expression is seen in sensory organs, gopplet cells, gonads, imaginal disks, proventriculus, fat body, hematopoietic organ, midgut, Malpighian tubules and ring gland.</text>
</comment>
<comment type="developmental stage">
    <text evidence="9 10 11">Expressed throughout the life cycle, highest expression in first and second instar larvae and adults (at protein level) (PubMed:7758246, PubMed:9373138, PubMed:9585178). Expressed in larval fat body, Malpighian tubules, gut, hematopoietic organ and imaginal discs, but not in salivary glands or brain (at protein level) (PubMed:9585178).</text>
</comment>
<comment type="PTM">
    <text evidence="7 16">Appears to produce proteins of differing size (Probable). Predicted to have a molecular mass of 56 kDa (TID56) however proteins of 50 kDa, 47 kDa and 40 kDa have been identified and named TID50, TID47 and TID40 (PubMed:12783860). TID50 and TID40 localize to the mitochondria while TID47 localizes to the cytoplasm (PubMed:12783860). TID50 is probably TID56 that has undergone mitochondrial transit peptide processing (Probable). TID40 and TID47 may be alternately processed proteins or may be isoforms resulting from alternative splicing (Probable).</text>
</comment>
<comment type="miscellaneous">
    <text>In strains Harvich and Apxo, there are 2 identical genes which code for l(2)tid protein.</text>
</comment>
<comment type="caution">
    <text evidence="8 9 16 17 18">Was originally thought to be the target of mutations leading to tumorous growth of imaginal discs, resulting in the name lethal(2)tumorous imaginal discs (l(2)tid). Encoded within the intron of the neighboring gene Alg3/lethal(2)neighbor of tid (l(2)not) (PubMed:7758246). The mutations leading to tumorous growth of imaginal discs were subsequently shown to affect the neighboring Alg3 gene (PubMed:29870719). Some authors may refer to Alg3 as l(2)tid or l(2)not interchangeably.</text>
</comment>
<feature type="transit peptide" description="Mitochondrion" evidence="3">
    <location>
        <begin position="1"/>
        <end position="62"/>
    </location>
</feature>
<feature type="chain" id="PRO_0000007258" description="DnaJ homolog l(2)tid, mitochondrial" evidence="3">
    <location>
        <begin position="63"/>
        <end position="520"/>
    </location>
</feature>
<feature type="domain" description="J" evidence="4">
    <location>
        <begin position="65"/>
        <end position="130"/>
    </location>
</feature>
<feature type="repeat" description="CXXCXGXG motif; approximate">
    <location>
        <begin position="227"/>
        <end position="234"/>
    </location>
</feature>
<feature type="repeat" description="CXXCXGXG motif">
    <location>
        <begin position="244"/>
        <end position="251"/>
    </location>
</feature>
<feature type="repeat" description="CXXCXGXG motif; approximate">
    <location>
        <begin position="266"/>
        <end position="273"/>
    </location>
</feature>
<feature type="repeat" description="CXXCXGXG motif">
    <location>
        <begin position="280"/>
        <end position="287"/>
    </location>
</feature>
<feature type="zinc finger region" description="CR-type" evidence="5">
    <location>
        <begin position="214"/>
        <end position="292"/>
    </location>
</feature>
<feature type="region of interest" description="Disordered" evidence="6">
    <location>
        <begin position="430"/>
        <end position="520"/>
    </location>
</feature>
<feature type="compositionally biased region" description="Low complexity" evidence="6">
    <location>
        <begin position="446"/>
        <end position="476"/>
    </location>
</feature>
<feature type="compositionally biased region" description="Basic and acidic residues" evidence="6">
    <location>
        <begin position="479"/>
        <end position="495"/>
    </location>
</feature>
<feature type="compositionally biased region" description="Gly residues" evidence="6">
    <location>
        <begin position="496"/>
        <end position="511"/>
    </location>
</feature>
<feature type="binding site" evidence="1">
    <location>
        <position position="227"/>
    </location>
    <ligand>
        <name>Zn(2+)</name>
        <dbReference type="ChEBI" id="CHEBI:29105"/>
        <label>1</label>
    </ligand>
</feature>
<feature type="binding site" evidence="1">
    <location>
        <position position="230"/>
    </location>
    <ligand>
        <name>Zn(2+)</name>
        <dbReference type="ChEBI" id="CHEBI:29105"/>
        <label>1</label>
    </ligand>
</feature>
<feature type="binding site" evidence="1">
    <location>
        <position position="244"/>
    </location>
    <ligand>
        <name>Zn(2+)</name>
        <dbReference type="ChEBI" id="CHEBI:29105"/>
        <label>2</label>
    </ligand>
</feature>
<feature type="binding site" evidence="1">
    <location>
        <position position="247"/>
    </location>
    <ligand>
        <name>Zn(2+)</name>
        <dbReference type="ChEBI" id="CHEBI:29105"/>
        <label>2</label>
    </ligand>
</feature>
<feature type="binding site" evidence="1">
    <location>
        <position position="266"/>
    </location>
    <ligand>
        <name>Zn(2+)</name>
        <dbReference type="ChEBI" id="CHEBI:29105"/>
        <label>2</label>
    </ligand>
</feature>
<feature type="binding site" evidence="1">
    <location>
        <position position="269"/>
    </location>
    <ligand>
        <name>Zn(2+)</name>
        <dbReference type="ChEBI" id="CHEBI:29105"/>
        <label>2</label>
    </ligand>
</feature>
<feature type="binding site" evidence="1">
    <location>
        <position position="280"/>
    </location>
    <ligand>
        <name>Zn(2+)</name>
        <dbReference type="ChEBI" id="CHEBI:29105"/>
        <label>1</label>
    </ligand>
</feature>
<feature type="binding site" evidence="1">
    <location>
        <position position="283"/>
    </location>
    <ligand>
        <name>Zn(2+)</name>
        <dbReference type="ChEBI" id="CHEBI:29105"/>
        <label>1</label>
    </ligand>
</feature>
<feature type="modified residue" description="Omega-N-methylarginine" evidence="1">
    <location>
        <position position="30"/>
    </location>
</feature>
<feature type="modified residue" description="N6-acetyllysine" evidence="2">
    <location>
        <position position="106"/>
    </location>
</feature>
<feature type="splice variant" id="VSP_008308" description="In isoform A." evidence="12">
    <original>AG</original>
    <variation>SE</variation>
    <location>
        <begin position="446"/>
        <end position="447"/>
    </location>
</feature>
<feature type="splice variant" id="VSP_008309" description="In isoform A." evidence="12">
    <location>
        <begin position="448"/>
        <end position="520"/>
    </location>
</feature>
<feature type="sequence variant" description="In strain: Apxo.">
    <original>T</original>
    <variation>A</variation>
    <location>
        <position position="28"/>
    </location>
</feature>
<feature type="sequence variant" description="In strain: Oregon-2 and Oregon-R.">
    <location>
        <begin position="47"/>
        <end position="48"/>
    </location>
</feature>
<feature type="sequence variant" description="In strain: Apxo.">
    <original>N</original>
    <variation>I</variation>
    <location>
        <position position="222"/>
    </location>
</feature>
<feature type="sequence variant" description="In strain: Apxo.">
    <location>
        <begin position="286"/>
        <end position="287"/>
    </location>
</feature>
<feature type="sequence variant" description="In strain: Oregon-2 and Oregon-R.">
    <original>K</original>
    <variation>R</variation>
    <location>
        <position position="286"/>
    </location>
</feature>
<feature type="sequence variant" description="In strain: Apxo.">
    <original>A</original>
    <variation>D</variation>
    <location>
        <position position="415"/>
    </location>
</feature>
<feature type="sequence variant" description="In strain: bIf and Berkeley.">
    <original>E</original>
    <variation>K</variation>
    <location>
        <position position="478"/>
    </location>
</feature>
<feature type="sequence variant" description="In strain: bIf and Berkeley.">
    <original>K</original>
    <variation>E</variation>
    <location>
        <position position="489"/>
    </location>
</feature>
<feature type="sequence conflict" description="In Ref. 2, 1, 3; CAA64528 and 6." evidence="16" ref="2 1 3 6">
    <original>K</original>
    <variation>M</variation>
    <location>
        <position position="286"/>
    </location>
</feature>
<feature type="sequence conflict" description="In Ref. 2, 1, 3; CAA64528 and 6." evidence="16" ref="2 1 3 6">
    <original>A</original>
    <variation>V</variation>
    <location>
        <position position="341"/>
    </location>
</feature>
<sequence length="520" mass="56137">MMISCKKLFVFRQLPAVRRCLAAAAFSTPRATSYRILSSAGSGSTRADAPQVRRLHTTRDLLAKDYYATLGVAKNANGKDIKKAYYQLAKKYHPDTNKEDPDAGRKFQEVSEAYEVLSDEQKRREYDTYGQTAENIGRQGGGFPGGGAGGFGPEGFSQSWQFRSSIDPEELFRKIFGEGNFRTNSFDDFADSKFGFGQAQEMVMDLTFAQAARGVNKDVNVNVVDQCPKCAGTKCEPGTKPGRCQYCNGTGFETVSTGPFVMRSTCRYCQGTRQHIKYPCSECEGKGRTVQRRKVTVPVPAGIENGQTVRMQVGSKELFVTFRVERSDYFRREGADVHTDAAISLAQAVLGGTVRVQGVYEDQWINVEPGTSSHHKIMLRGKGLKRVNAHGHGDHYVHVKITVPSAKKLDKKRLALIEAYAELEEDTPGQIHGIANRKDGSKQATAGASEEPGAGAAAKASAAAAGSGASKPGPGAEESEGKDQWTDNKKTKAKEGGGSGSGQGDGGGGGFISKIKSMFN</sequence>
<evidence type="ECO:0000250" key="1">
    <source>
        <dbReference type="UniProtKB" id="Q96EY1"/>
    </source>
</evidence>
<evidence type="ECO:0000250" key="2">
    <source>
        <dbReference type="UniProtKB" id="Q99M87"/>
    </source>
</evidence>
<evidence type="ECO:0000255" key="3"/>
<evidence type="ECO:0000255" key="4">
    <source>
        <dbReference type="PROSITE-ProRule" id="PRU00286"/>
    </source>
</evidence>
<evidence type="ECO:0000255" key="5">
    <source>
        <dbReference type="PROSITE-ProRule" id="PRU00546"/>
    </source>
</evidence>
<evidence type="ECO:0000256" key="6">
    <source>
        <dbReference type="SAM" id="MobiDB-lite"/>
    </source>
</evidence>
<evidence type="ECO:0000269" key="7">
    <source>
    </source>
</evidence>
<evidence type="ECO:0000269" key="8">
    <source>
    </source>
</evidence>
<evidence type="ECO:0000269" key="9">
    <source>
    </source>
</evidence>
<evidence type="ECO:0000269" key="10">
    <source>
    </source>
</evidence>
<evidence type="ECO:0000269" key="11">
    <source>
    </source>
</evidence>
<evidence type="ECO:0000303" key="12">
    <source>
    </source>
</evidence>
<evidence type="ECO:0000303" key="13">
    <source>
    </source>
</evidence>
<evidence type="ECO:0000303" key="14">
    <source>
    </source>
</evidence>
<evidence type="ECO:0000303" key="15">
    <source>
    </source>
</evidence>
<evidence type="ECO:0000305" key="16"/>
<evidence type="ECO:0000305" key="17">
    <source>
    </source>
</evidence>
<evidence type="ECO:0000305" key="18">
    <source>
    </source>
</evidence>
<evidence type="ECO:0000312" key="19">
    <source>
        <dbReference type="FlyBase" id="FBgn0002174"/>
    </source>
</evidence>
<evidence type="ECO:0000312" key="20">
    <source>
        <dbReference type="Proteomes" id="UP000000803"/>
    </source>
</evidence>
<organism evidence="20">
    <name type="scientific">Drosophila melanogaster</name>
    <name type="common">Fruit fly</name>
    <dbReference type="NCBI Taxonomy" id="7227"/>
    <lineage>
        <taxon>Eukaryota</taxon>
        <taxon>Metazoa</taxon>
        <taxon>Ecdysozoa</taxon>
        <taxon>Arthropoda</taxon>
        <taxon>Hexapoda</taxon>
        <taxon>Insecta</taxon>
        <taxon>Pterygota</taxon>
        <taxon>Neoptera</taxon>
        <taxon>Endopterygota</taxon>
        <taxon>Diptera</taxon>
        <taxon>Brachycera</taxon>
        <taxon>Muscomorpha</taxon>
        <taxon>Ephydroidea</taxon>
        <taxon>Drosophilidae</taxon>
        <taxon>Drosophila</taxon>
        <taxon>Sophophora</taxon>
    </lineage>
</organism>
<keyword id="KW-0007">Acetylation</keyword>
<keyword id="KW-0025">Alternative splicing</keyword>
<keyword id="KW-0143">Chaperone</keyword>
<keyword id="KW-0963">Cytoplasm</keyword>
<keyword id="KW-0217">Developmental protein</keyword>
<keyword id="KW-0472">Membrane</keyword>
<keyword id="KW-0479">Metal-binding</keyword>
<keyword id="KW-0488">Methylation</keyword>
<keyword id="KW-0496">Mitochondrion</keyword>
<keyword id="KW-1000">Mitochondrion outer membrane</keyword>
<keyword id="KW-1185">Reference proteome</keyword>
<keyword id="KW-0677">Repeat</keyword>
<keyword id="KW-0809">Transit peptide</keyword>
<keyword id="KW-0862">Zinc</keyword>
<keyword id="KW-0863">Zinc-finger</keyword>
<name>DJTID_DROME</name>
<protein>
    <recommendedName>
        <fullName evidence="16">DnaJ homolog l(2)tid, mitochondrial</fullName>
    </recommendedName>
    <alternativeName>
        <fullName evidence="14">Protein lethal(2)tumorous imaginal discs</fullName>
    </alternativeName>
    <alternativeName>
        <fullName evidence="15">TID50</fullName>
    </alternativeName>
    <alternativeName>
        <fullName evidence="15">TID56</fullName>
    </alternativeName>
</protein>
<proteinExistence type="evidence at protein level"/>
<reference key="1">
    <citation type="journal article" date="1995" name="Dev. Genet.">
        <title>Tumor suppression in Drosophila is causally related to the function of the lethal(2) tumorous imaginal discs gene, a dnaJ homolog.</title>
        <authorList>
            <person name="Kurzik-Dumke U."/>
            <person name="Gundacker D."/>
            <person name="Rentrop M."/>
            <person name="Gateff E."/>
        </authorList>
    </citation>
    <scope>NUCLEOTIDE SEQUENCE [GENOMIC DNA]</scope>
    <scope>FUNCTION</scope>
    <scope>TISSUE SPECIFICITY</scope>
    <scope>DEVELOPMENTAL STAGE</scope>
    <source>
        <strain>Oregon-R</strain>
        <tissue>Embryo</tissue>
    </source>
</reference>
<reference key="2">
    <citation type="journal article" date="1997" name="Gene">
        <title>Gene within gene configuration and expression of the Drosophila melanogaster genes lethal(2) neighbour of tid [l(2)not] and lethal(2) relative of tid.</title>
        <authorList>
            <person name="Kurzik-Dumke U."/>
            <person name="Kaymer M."/>
            <person name="Gundacker D."/>
            <person name="Debes A."/>
            <person name="Labitzke K."/>
        </authorList>
    </citation>
    <scope>NUCLEOTIDE SEQUENCE [GENOMIC DNA]</scope>
    <scope>TISSUE SPECIFICITY</scope>
    <scope>DEVELOPMENTAL STAGE</scope>
    <source>
        <strain>Apxo</strain>
        <strain>bIf</strain>
        <strain>Harvich</strain>
        <strain>Oregon-R</strain>
    </source>
</reference>
<reference key="3">
    <citation type="submission" date="1996-05" db="EMBL/GenBank/DDBJ databases">
        <authorList>
            <person name="Gundacker S."/>
            <person name="Neubhuer M."/>
            <person name="Kurzik-Dumke U."/>
        </authorList>
    </citation>
    <scope>NUCLEOTIDE SEQUENCE [GENOMIC DNA]</scope>
    <source>
        <strain>Oregon-2</strain>
    </source>
</reference>
<reference key="4">
    <citation type="journal article" date="2000" name="Science">
        <title>The genome sequence of Drosophila melanogaster.</title>
        <authorList>
            <person name="Adams M.D."/>
            <person name="Celniker S.E."/>
            <person name="Holt R.A."/>
            <person name="Evans C.A."/>
            <person name="Gocayne J.D."/>
            <person name="Amanatides P.G."/>
            <person name="Scherer S.E."/>
            <person name="Li P.W."/>
            <person name="Hoskins R.A."/>
            <person name="Galle R.F."/>
            <person name="George R.A."/>
            <person name="Lewis S.E."/>
            <person name="Richards S."/>
            <person name="Ashburner M."/>
            <person name="Henderson S.N."/>
            <person name="Sutton G.G."/>
            <person name="Wortman J.R."/>
            <person name="Yandell M.D."/>
            <person name="Zhang Q."/>
            <person name="Chen L.X."/>
            <person name="Brandon R.C."/>
            <person name="Rogers Y.-H.C."/>
            <person name="Blazej R.G."/>
            <person name="Champe M."/>
            <person name="Pfeiffer B.D."/>
            <person name="Wan K.H."/>
            <person name="Doyle C."/>
            <person name="Baxter E.G."/>
            <person name="Helt G."/>
            <person name="Nelson C.R."/>
            <person name="Miklos G.L.G."/>
            <person name="Abril J.F."/>
            <person name="Agbayani A."/>
            <person name="An H.-J."/>
            <person name="Andrews-Pfannkoch C."/>
            <person name="Baldwin D."/>
            <person name="Ballew R.M."/>
            <person name="Basu A."/>
            <person name="Baxendale J."/>
            <person name="Bayraktaroglu L."/>
            <person name="Beasley E.M."/>
            <person name="Beeson K.Y."/>
            <person name="Benos P.V."/>
            <person name="Berman B.P."/>
            <person name="Bhandari D."/>
            <person name="Bolshakov S."/>
            <person name="Borkova D."/>
            <person name="Botchan M.R."/>
            <person name="Bouck J."/>
            <person name="Brokstein P."/>
            <person name="Brottier P."/>
            <person name="Burtis K.C."/>
            <person name="Busam D.A."/>
            <person name="Butler H."/>
            <person name="Cadieu E."/>
            <person name="Center A."/>
            <person name="Chandra I."/>
            <person name="Cherry J.M."/>
            <person name="Cawley S."/>
            <person name="Dahlke C."/>
            <person name="Davenport L.B."/>
            <person name="Davies P."/>
            <person name="de Pablos B."/>
            <person name="Delcher A."/>
            <person name="Deng Z."/>
            <person name="Mays A.D."/>
            <person name="Dew I."/>
            <person name="Dietz S.M."/>
            <person name="Dodson K."/>
            <person name="Doup L.E."/>
            <person name="Downes M."/>
            <person name="Dugan-Rocha S."/>
            <person name="Dunkov B.C."/>
            <person name="Dunn P."/>
            <person name="Durbin K.J."/>
            <person name="Evangelista C.C."/>
            <person name="Ferraz C."/>
            <person name="Ferriera S."/>
            <person name="Fleischmann W."/>
            <person name="Fosler C."/>
            <person name="Gabrielian A.E."/>
            <person name="Garg N.S."/>
            <person name="Gelbart W.M."/>
            <person name="Glasser K."/>
            <person name="Glodek A."/>
            <person name="Gong F."/>
            <person name="Gorrell J.H."/>
            <person name="Gu Z."/>
            <person name="Guan P."/>
            <person name="Harris M."/>
            <person name="Harris N.L."/>
            <person name="Harvey D.A."/>
            <person name="Heiman T.J."/>
            <person name="Hernandez J.R."/>
            <person name="Houck J."/>
            <person name="Hostin D."/>
            <person name="Houston K.A."/>
            <person name="Howland T.J."/>
            <person name="Wei M.-H."/>
            <person name="Ibegwam C."/>
            <person name="Jalali M."/>
            <person name="Kalush F."/>
            <person name="Karpen G.H."/>
            <person name="Ke Z."/>
            <person name="Kennison J.A."/>
            <person name="Ketchum K.A."/>
            <person name="Kimmel B.E."/>
            <person name="Kodira C.D."/>
            <person name="Kraft C.L."/>
            <person name="Kravitz S."/>
            <person name="Kulp D."/>
            <person name="Lai Z."/>
            <person name="Lasko P."/>
            <person name="Lei Y."/>
            <person name="Levitsky A.A."/>
            <person name="Li J.H."/>
            <person name="Li Z."/>
            <person name="Liang Y."/>
            <person name="Lin X."/>
            <person name="Liu X."/>
            <person name="Mattei B."/>
            <person name="McIntosh T.C."/>
            <person name="McLeod M.P."/>
            <person name="McPherson D."/>
            <person name="Merkulov G."/>
            <person name="Milshina N.V."/>
            <person name="Mobarry C."/>
            <person name="Morris J."/>
            <person name="Moshrefi A."/>
            <person name="Mount S.M."/>
            <person name="Moy M."/>
            <person name="Murphy B."/>
            <person name="Murphy L."/>
            <person name="Muzny D.M."/>
            <person name="Nelson D.L."/>
            <person name="Nelson D.R."/>
            <person name="Nelson K.A."/>
            <person name="Nixon K."/>
            <person name="Nusskern D.R."/>
            <person name="Pacleb J.M."/>
            <person name="Palazzolo M."/>
            <person name="Pittman G.S."/>
            <person name="Pan S."/>
            <person name="Pollard J."/>
            <person name="Puri V."/>
            <person name="Reese M.G."/>
            <person name="Reinert K."/>
            <person name="Remington K."/>
            <person name="Saunders R.D.C."/>
            <person name="Scheeler F."/>
            <person name="Shen H."/>
            <person name="Shue B.C."/>
            <person name="Siden-Kiamos I."/>
            <person name="Simpson M."/>
            <person name="Skupski M.P."/>
            <person name="Smith T.J."/>
            <person name="Spier E."/>
            <person name="Spradling A.C."/>
            <person name="Stapleton M."/>
            <person name="Strong R."/>
            <person name="Sun E."/>
            <person name="Svirskas R."/>
            <person name="Tector C."/>
            <person name="Turner R."/>
            <person name="Venter E."/>
            <person name="Wang A.H."/>
            <person name="Wang X."/>
            <person name="Wang Z.-Y."/>
            <person name="Wassarman D.A."/>
            <person name="Weinstock G.M."/>
            <person name="Weissenbach J."/>
            <person name="Williams S.M."/>
            <person name="Woodage T."/>
            <person name="Worley K.C."/>
            <person name="Wu D."/>
            <person name="Yang S."/>
            <person name="Yao Q.A."/>
            <person name="Ye J."/>
            <person name="Yeh R.-F."/>
            <person name="Zaveri J.S."/>
            <person name="Zhan M."/>
            <person name="Zhang G."/>
            <person name="Zhao Q."/>
            <person name="Zheng L."/>
            <person name="Zheng X.H."/>
            <person name="Zhong F.N."/>
            <person name="Zhong W."/>
            <person name="Zhou X."/>
            <person name="Zhu S.C."/>
            <person name="Zhu X."/>
            <person name="Smith H.O."/>
            <person name="Gibbs R.A."/>
            <person name="Myers E.W."/>
            <person name="Rubin G.M."/>
            <person name="Venter J.C."/>
        </authorList>
    </citation>
    <scope>NUCLEOTIDE SEQUENCE [LARGE SCALE GENOMIC DNA]</scope>
    <source>
        <strain>Berkeley</strain>
    </source>
</reference>
<reference key="5">
    <citation type="journal article" date="2002" name="Genome Biol.">
        <title>Annotation of the Drosophila melanogaster euchromatic genome: a systematic review.</title>
        <authorList>
            <person name="Misra S."/>
            <person name="Crosby M.A."/>
            <person name="Mungall C.J."/>
            <person name="Matthews B.B."/>
            <person name="Campbell K.S."/>
            <person name="Hradecky P."/>
            <person name="Huang Y."/>
            <person name="Kaminker J.S."/>
            <person name="Millburn G.H."/>
            <person name="Prochnik S.E."/>
            <person name="Smith C.D."/>
            <person name="Tupy J.L."/>
            <person name="Whitfield E.J."/>
            <person name="Bayraktaroglu L."/>
            <person name="Berman B.P."/>
            <person name="Bettencourt B.R."/>
            <person name="Celniker S.E."/>
            <person name="de Grey A.D.N.J."/>
            <person name="Drysdale R.A."/>
            <person name="Harris N.L."/>
            <person name="Richter J."/>
            <person name="Russo S."/>
            <person name="Schroeder A.J."/>
            <person name="Shu S.Q."/>
            <person name="Stapleton M."/>
            <person name="Yamada C."/>
            <person name="Ashburner M."/>
            <person name="Gelbart W.M."/>
            <person name="Rubin G.M."/>
            <person name="Lewis S.E."/>
        </authorList>
    </citation>
    <scope>GENOME REANNOTATION</scope>
    <scope>ALTERNATIVE SPLICING</scope>
    <source>
        <strain>Berkeley</strain>
    </source>
</reference>
<reference key="6">
    <citation type="journal article" date="2002" name="Genome Biol.">
        <title>A Drosophila full-length cDNA resource.</title>
        <authorList>
            <person name="Stapleton M."/>
            <person name="Carlson J.W."/>
            <person name="Brokstein P."/>
            <person name="Yu C."/>
            <person name="Champe M."/>
            <person name="George R.A."/>
            <person name="Guarin H."/>
            <person name="Kronmiller B."/>
            <person name="Pacleb J.M."/>
            <person name="Park S."/>
            <person name="Wan K.H."/>
            <person name="Rubin G.M."/>
            <person name="Celniker S.E."/>
        </authorList>
    </citation>
    <scope>NUCLEOTIDE SEQUENCE [LARGE SCALE MRNA] (ISOFORM B)</scope>
    <source>
        <strain>Berkeley</strain>
        <tissue>Embryo</tissue>
    </source>
</reference>
<reference key="7">
    <citation type="journal article" date="1998" name="Cell Stress Chaperones">
        <title>Mitochondrial localization and temporal expression of the Drosophila melanogaster DnaJ homologous tumor suppressor Tid50.</title>
        <authorList>
            <person name="Kurzik-Dumke U."/>
            <person name="Debes A."/>
            <person name="Kaymer M."/>
            <person name="Dienes P."/>
        </authorList>
    </citation>
    <scope>SUBCELLULAR LOCATION</scope>
    <scope>DEVELOPMENTAL STAGE</scope>
</reference>
<reference key="8">
    <citation type="journal article" date="2003" name="J. Biol. Chem.">
        <title>Understanding human cancer using Drosophila: Tid47, a cytosolic product of the DnaJ-like tumor suppressor gene l2Tid, is a novel molecular partner of patched related to skin cancer.</title>
        <authorList>
            <person name="Canamasas I."/>
            <person name="Debes A."/>
            <person name="Natali P.G."/>
            <person name="Kurzik-Dumke U."/>
        </authorList>
    </citation>
    <scope>FUNCTION</scope>
    <scope>INTERACTION WITH PTC AND HH</scope>
    <scope>SUBCELLULAR LOCATION</scope>
    <scope>PROTEOLYTIC CLEAVAGE</scope>
</reference>
<reference key="9">
    <citation type="journal article" date="2018" name="Dev. Cell">
        <title>A Drosophila Tumor Suppressor Gene Prevents Tonic TNF Signaling through Receptor N-Glycosylation.</title>
        <authorList>
            <person name="de Vreede G."/>
            <person name="Morrison H.A."/>
            <person name="Houser A.M."/>
            <person name="Boileau R.M."/>
            <person name="Andersen D."/>
            <person name="Colombani J."/>
            <person name="Bilder D."/>
        </authorList>
    </citation>
    <scope>NOMENCLATURE</scope>
</reference>
<dbReference type="EMBL" id="X95241">
    <property type="protein sequence ID" value="CAA64528.1"/>
    <property type="molecule type" value="Genomic_DNA"/>
</dbReference>
<dbReference type="EMBL" id="X95242">
    <property type="protein sequence ID" value="CAA64531.1"/>
    <property type="molecule type" value="Genomic_DNA"/>
</dbReference>
<dbReference type="EMBL" id="X95247">
    <property type="protein sequence ID" value="CAA64536.1"/>
    <property type="molecule type" value="Genomic_DNA"/>
</dbReference>
<dbReference type="EMBL" id="X95249">
    <property type="protein sequence ID" value="CAA64538.1"/>
    <property type="molecule type" value="Genomic_DNA"/>
</dbReference>
<dbReference type="EMBL" id="X95251">
    <property type="protein sequence ID" value="CAA64540.1"/>
    <property type="molecule type" value="Genomic_DNA"/>
</dbReference>
<dbReference type="EMBL" id="Y10074">
    <property type="protein sequence ID" value="CAA71163.1"/>
    <property type="molecule type" value="Genomic_DNA"/>
</dbReference>
<dbReference type="EMBL" id="Y10074">
    <property type="protein sequence ID" value="CAA71164.1"/>
    <property type="molecule type" value="Genomic_DNA"/>
</dbReference>
<dbReference type="EMBL" id="X77822">
    <property type="protein sequence ID" value="CAA54837.1"/>
    <property type="molecule type" value="Genomic_DNA"/>
</dbReference>
<dbReference type="EMBL" id="X98094">
    <property type="protein sequence ID" value="CAA66720.1"/>
    <property type="molecule type" value="Genomic_DNA"/>
</dbReference>
<dbReference type="EMBL" id="AE013599">
    <property type="protein sequence ID" value="AAF47051.3"/>
    <property type="molecule type" value="Genomic_DNA"/>
</dbReference>
<dbReference type="EMBL" id="AE013599">
    <property type="protein sequence ID" value="AAS64764.1"/>
    <property type="molecule type" value="Genomic_DNA"/>
</dbReference>
<dbReference type="EMBL" id="AY069853">
    <property type="protein sequence ID" value="AAL39998.1"/>
    <property type="molecule type" value="mRNA"/>
</dbReference>
<dbReference type="PIR" id="S42091">
    <property type="entry name" value="S42091"/>
</dbReference>
<dbReference type="RefSeq" id="NP_524932.2">
    <molecule id="Q27237-2"/>
    <property type="nucleotide sequence ID" value="NM_080193.5"/>
</dbReference>
<dbReference type="RefSeq" id="NP_995932.1">
    <property type="nucleotide sequence ID" value="NM_206210.3"/>
</dbReference>
<dbReference type="SMR" id="Q27237"/>
<dbReference type="BioGRID" id="71741">
    <property type="interactions" value="11"/>
</dbReference>
<dbReference type="FunCoup" id="Q27237">
    <property type="interactions" value="1933"/>
</dbReference>
<dbReference type="IntAct" id="Q27237">
    <property type="interactions" value="2"/>
</dbReference>
<dbReference type="STRING" id="7227.FBpp0088955"/>
<dbReference type="PaxDb" id="7227-FBpp0088955"/>
<dbReference type="EnsemblMetazoa" id="FBtr0089503">
    <molecule id="Q27237-2"/>
    <property type="protein sequence ID" value="FBpp0088498"/>
    <property type="gene ID" value="FBgn0002174"/>
</dbReference>
<dbReference type="GeneID" id="48844"/>
<dbReference type="KEGG" id="dme:Dmel_CG5504"/>
<dbReference type="AGR" id="FB:FBgn0002174"/>
<dbReference type="FlyBase" id="FBgn0002174">
    <property type="gene designation" value="CG5504"/>
</dbReference>
<dbReference type="VEuPathDB" id="VectorBase:FBgn0002174"/>
<dbReference type="eggNOG" id="KOG0715">
    <property type="taxonomic scope" value="Eukaryota"/>
</dbReference>
<dbReference type="GeneTree" id="ENSGT00940000155280"/>
<dbReference type="InParanoid" id="Q27237"/>
<dbReference type="OrthoDB" id="10256793at2759"/>
<dbReference type="PhylomeDB" id="Q27237"/>
<dbReference type="SignaLink" id="Q27237"/>
<dbReference type="BioGRID-ORCS" id="48844">
    <property type="hits" value="0 hits in 1 CRISPR screen"/>
</dbReference>
<dbReference type="GenomeRNAi" id="48844"/>
<dbReference type="PRO" id="PR:Q27237"/>
<dbReference type="Proteomes" id="UP000000803">
    <property type="component" value="Chromosome 2R"/>
</dbReference>
<dbReference type="Bgee" id="FBgn0002174">
    <property type="expression patterns" value="Expressed in early elongation stage spermatid (Drosophila) in testis and 138 other cell types or tissues"/>
</dbReference>
<dbReference type="ExpressionAtlas" id="Q27237">
    <property type="expression patterns" value="baseline and differential"/>
</dbReference>
<dbReference type="GO" id="GO:0005829">
    <property type="term" value="C:cytosol"/>
    <property type="evidence" value="ECO:0000314"/>
    <property type="project" value="FlyBase"/>
</dbReference>
<dbReference type="GO" id="GO:0005741">
    <property type="term" value="C:mitochondrial outer membrane"/>
    <property type="evidence" value="ECO:0007669"/>
    <property type="project" value="UniProtKB-SubCell"/>
</dbReference>
<dbReference type="GO" id="GO:0005739">
    <property type="term" value="C:mitochondrion"/>
    <property type="evidence" value="ECO:0000314"/>
    <property type="project" value="FlyBase"/>
</dbReference>
<dbReference type="GO" id="GO:0005524">
    <property type="term" value="F:ATP binding"/>
    <property type="evidence" value="ECO:0007669"/>
    <property type="project" value="InterPro"/>
</dbReference>
<dbReference type="GO" id="GO:0031072">
    <property type="term" value="F:heat shock protein binding"/>
    <property type="evidence" value="ECO:0007669"/>
    <property type="project" value="InterPro"/>
</dbReference>
<dbReference type="GO" id="GO:0005113">
    <property type="term" value="F:patched binding"/>
    <property type="evidence" value="ECO:0000353"/>
    <property type="project" value="FlyBase"/>
</dbReference>
<dbReference type="GO" id="GO:0051082">
    <property type="term" value="F:unfolded protein binding"/>
    <property type="evidence" value="ECO:0007669"/>
    <property type="project" value="InterPro"/>
</dbReference>
<dbReference type="GO" id="GO:0008270">
    <property type="term" value="F:zinc ion binding"/>
    <property type="evidence" value="ECO:0007669"/>
    <property type="project" value="UniProtKB-KW"/>
</dbReference>
<dbReference type="GO" id="GO:0007005">
    <property type="term" value="P:mitochondrion organization"/>
    <property type="evidence" value="ECO:0000318"/>
    <property type="project" value="GO_Central"/>
</dbReference>
<dbReference type="GO" id="GO:0045879">
    <property type="term" value="P:negative regulation of smoothened signaling pathway"/>
    <property type="evidence" value="ECO:0000316"/>
    <property type="project" value="FlyBase"/>
</dbReference>
<dbReference type="GO" id="GO:0006457">
    <property type="term" value="P:protein folding"/>
    <property type="evidence" value="ECO:0007669"/>
    <property type="project" value="InterPro"/>
</dbReference>
<dbReference type="GO" id="GO:0009408">
    <property type="term" value="P:response to heat"/>
    <property type="evidence" value="ECO:0007669"/>
    <property type="project" value="InterPro"/>
</dbReference>
<dbReference type="CDD" id="cd06257">
    <property type="entry name" value="DnaJ"/>
    <property type="match status" value="1"/>
</dbReference>
<dbReference type="CDD" id="cd10747">
    <property type="entry name" value="DnaJ_C"/>
    <property type="match status" value="1"/>
</dbReference>
<dbReference type="CDD" id="cd10719">
    <property type="entry name" value="DnaJ_zf"/>
    <property type="match status" value="1"/>
</dbReference>
<dbReference type="FunFam" id="2.60.260.20:FF:000005">
    <property type="entry name" value="Chaperone protein dnaJ 1, mitochondrial"/>
    <property type="match status" value="1"/>
</dbReference>
<dbReference type="FunFam" id="2.10.230.10:FF:000003">
    <property type="entry name" value="dnaJ homolog subfamily A member 3, mitochondrial"/>
    <property type="match status" value="1"/>
</dbReference>
<dbReference type="FunFam" id="1.10.287.110:FF:000075">
    <property type="entry name" value="Uncharacterized protein, isoform D"/>
    <property type="match status" value="1"/>
</dbReference>
<dbReference type="Gene3D" id="1.10.287.110">
    <property type="entry name" value="DnaJ domain"/>
    <property type="match status" value="1"/>
</dbReference>
<dbReference type="Gene3D" id="2.10.230.10">
    <property type="entry name" value="Heat shock protein DnaJ, cysteine-rich domain"/>
    <property type="match status" value="1"/>
</dbReference>
<dbReference type="Gene3D" id="2.60.260.20">
    <property type="entry name" value="Urease metallochaperone UreE, N-terminal domain"/>
    <property type="match status" value="2"/>
</dbReference>
<dbReference type="HAMAP" id="MF_01152">
    <property type="entry name" value="DnaJ"/>
    <property type="match status" value="1"/>
</dbReference>
<dbReference type="InterPro" id="IPR051938">
    <property type="entry name" value="Apopto_cytoskel_mod"/>
</dbReference>
<dbReference type="InterPro" id="IPR012724">
    <property type="entry name" value="DnaJ"/>
</dbReference>
<dbReference type="InterPro" id="IPR002939">
    <property type="entry name" value="DnaJ_C"/>
</dbReference>
<dbReference type="InterPro" id="IPR001623">
    <property type="entry name" value="DnaJ_domain"/>
</dbReference>
<dbReference type="InterPro" id="IPR018253">
    <property type="entry name" value="DnaJ_domain_CS"/>
</dbReference>
<dbReference type="InterPro" id="IPR008971">
    <property type="entry name" value="HSP40/DnaJ_pept-bd"/>
</dbReference>
<dbReference type="InterPro" id="IPR001305">
    <property type="entry name" value="HSP_DnaJ_Cys-rich_dom"/>
</dbReference>
<dbReference type="InterPro" id="IPR036410">
    <property type="entry name" value="HSP_DnaJ_Cys-rich_dom_sf"/>
</dbReference>
<dbReference type="InterPro" id="IPR036869">
    <property type="entry name" value="J_dom_sf"/>
</dbReference>
<dbReference type="PANTHER" id="PTHR44145">
    <property type="entry name" value="DNAJ HOMOLOG SUBFAMILY A MEMBER 3, MITOCHONDRIAL"/>
    <property type="match status" value="1"/>
</dbReference>
<dbReference type="PANTHER" id="PTHR44145:SF3">
    <property type="entry name" value="DNAJ HOMOLOG SUBFAMILY A MEMBER 3, MITOCHONDRIAL"/>
    <property type="match status" value="1"/>
</dbReference>
<dbReference type="Pfam" id="PF00226">
    <property type="entry name" value="DnaJ"/>
    <property type="match status" value="1"/>
</dbReference>
<dbReference type="Pfam" id="PF01556">
    <property type="entry name" value="DnaJ_C"/>
    <property type="match status" value="1"/>
</dbReference>
<dbReference type="Pfam" id="PF00684">
    <property type="entry name" value="DnaJ_CXXCXGXG"/>
    <property type="match status" value="1"/>
</dbReference>
<dbReference type="PRINTS" id="PR00625">
    <property type="entry name" value="JDOMAIN"/>
</dbReference>
<dbReference type="SMART" id="SM00271">
    <property type="entry name" value="DnaJ"/>
    <property type="match status" value="1"/>
</dbReference>
<dbReference type="SUPFAM" id="SSF46565">
    <property type="entry name" value="Chaperone J-domain"/>
    <property type="match status" value="1"/>
</dbReference>
<dbReference type="SUPFAM" id="SSF57938">
    <property type="entry name" value="DnaJ/Hsp40 cysteine-rich domain"/>
    <property type="match status" value="1"/>
</dbReference>
<dbReference type="SUPFAM" id="SSF49493">
    <property type="entry name" value="HSP40/DnaJ peptide-binding domain"/>
    <property type="match status" value="1"/>
</dbReference>
<dbReference type="PROSITE" id="PS00636">
    <property type="entry name" value="DNAJ_1"/>
    <property type="match status" value="1"/>
</dbReference>
<dbReference type="PROSITE" id="PS50076">
    <property type="entry name" value="DNAJ_2"/>
    <property type="match status" value="1"/>
</dbReference>
<dbReference type="PROSITE" id="PS51188">
    <property type="entry name" value="ZF_CR"/>
    <property type="match status" value="1"/>
</dbReference>